<sequence length="184" mass="21510">MKVIAVTGYKPFELGIFKNDHPGVECIKKALRRKLTAFVEDGLEWVIISGQLGVELWAAEVVFEIQVEYPDLKLAVFTPFLEQEEGWKEDNREYYEFILSQADHVDSITKRKYESPEQFKLKNQFFIEKSDALLAVYDEEKPGSPKYIVEAAKKKGEIENYHSYFILFSDLQDIIEEEQWNNAE</sequence>
<reference key="1">
    <citation type="journal article" date="2007" name="J. Bacteriol.">
        <title>The complete genome sequence of Bacillus thuringiensis Al Hakam.</title>
        <authorList>
            <person name="Challacombe J.F."/>
            <person name="Altherr M.R."/>
            <person name="Xie G."/>
            <person name="Bhotika S.S."/>
            <person name="Brown N."/>
            <person name="Bruce D."/>
            <person name="Campbell C.S."/>
            <person name="Campbell M.L."/>
            <person name="Chen J."/>
            <person name="Chertkov O."/>
            <person name="Cleland C."/>
            <person name="Dimitrijevic M."/>
            <person name="Doggett N.A."/>
            <person name="Fawcett J.J."/>
            <person name="Glavina T."/>
            <person name="Goodwin L.A."/>
            <person name="Green L.D."/>
            <person name="Han C.S."/>
            <person name="Hill K.K."/>
            <person name="Hitchcock P."/>
            <person name="Jackson P.J."/>
            <person name="Keim P."/>
            <person name="Kewalramani A.R."/>
            <person name="Longmire J."/>
            <person name="Lucas S."/>
            <person name="Malfatti S."/>
            <person name="Martinez D."/>
            <person name="McMurry K."/>
            <person name="Meincke L.J."/>
            <person name="Misra M."/>
            <person name="Moseman B.L."/>
            <person name="Mundt M."/>
            <person name="Munk A.C."/>
            <person name="Okinaka R.T."/>
            <person name="Parson-Quintana B."/>
            <person name="Reilly L.P."/>
            <person name="Richardson P."/>
            <person name="Robinson D.L."/>
            <person name="Saunders E."/>
            <person name="Tapia R."/>
            <person name="Tesmer J.G."/>
            <person name="Thayer N."/>
            <person name="Thompson L.S."/>
            <person name="Tice H."/>
            <person name="Ticknor L.O."/>
            <person name="Wills P.L."/>
            <person name="Gilna P."/>
            <person name="Brettin T.S."/>
        </authorList>
    </citation>
    <scope>NUCLEOTIDE SEQUENCE [LARGE SCALE GENOMIC DNA]</scope>
    <source>
        <strain>Al Hakam</strain>
    </source>
</reference>
<gene>
    <name type="ordered locus">BALH_1408</name>
</gene>
<name>Y1408_BACAH</name>
<evidence type="ECO:0000255" key="1">
    <source>
        <dbReference type="HAMAP-Rule" id="MF_01575"/>
    </source>
</evidence>
<proteinExistence type="inferred from homology"/>
<accession>A0RC08</accession>
<dbReference type="EMBL" id="CP000485">
    <property type="protein sequence ID" value="ABK84751.1"/>
    <property type="molecule type" value="Genomic_DNA"/>
</dbReference>
<dbReference type="RefSeq" id="WP_000862921.1">
    <property type="nucleotide sequence ID" value="NC_008600.1"/>
</dbReference>
<dbReference type="SMR" id="A0RC08"/>
<dbReference type="KEGG" id="btl:BALH_1408"/>
<dbReference type="HOGENOM" id="CLU_105319_0_0_9"/>
<dbReference type="Gene3D" id="3.40.50.450">
    <property type="match status" value="1"/>
</dbReference>
<dbReference type="HAMAP" id="MF_01575">
    <property type="entry name" value="UPF0398"/>
    <property type="match status" value="1"/>
</dbReference>
<dbReference type="InterPro" id="IPR010697">
    <property type="entry name" value="YspA"/>
</dbReference>
<dbReference type="NCBIfam" id="NF010181">
    <property type="entry name" value="PRK13660.1"/>
    <property type="match status" value="1"/>
</dbReference>
<dbReference type="PANTHER" id="PTHR38440:SF1">
    <property type="entry name" value="UPF0398 PROTEIN SPR0331"/>
    <property type="match status" value="1"/>
</dbReference>
<dbReference type="PANTHER" id="PTHR38440">
    <property type="entry name" value="UPF0398 PROTEIN YPSA"/>
    <property type="match status" value="1"/>
</dbReference>
<dbReference type="Pfam" id="PF06908">
    <property type="entry name" value="YpsA"/>
    <property type="match status" value="1"/>
</dbReference>
<dbReference type="PIRSF" id="PIRSF021290">
    <property type="entry name" value="DUF1273"/>
    <property type="match status" value="1"/>
</dbReference>
<dbReference type="SUPFAM" id="SSF102405">
    <property type="entry name" value="MCP/YpsA-like"/>
    <property type="match status" value="1"/>
</dbReference>
<organism>
    <name type="scientific">Bacillus thuringiensis (strain Al Hakam)</name>
    <dbReference type="NCBI Taxonomy" id="412694"/>
    <lineage>
        <taxon>Bacteria</taxon>
        <taxon>Bacillati</taxon>
        <taxon>Bacillota</taxon>
        <taxon>Bacilli</taxon>
        <taxon>Bacillales</taxon>
        <taxon>Bacillaceae</taxon>
        <taxon>Bacillus</taxon>
        <taxon>Bacillus cereus group</taxon>
    </lineage>
</organism>
<protein>
    <recommendedName>
        <fullName evidence="1">UPF0398 protein BALH_1408</fullName>
    </recommendedName>
</protein>
<comment type="similarity">
    <text evidence="1">Belongs to the UPF0398 family.</text>
</comment>
<feature type="chain" id="PRO_1000069210" description="UPF0398 protein BALH_1408">
    <location>
        <begin position="1"/>
        <end position="184"/>
    </location>
</feature>